<feature type="chain" id="PRO_0000293196" description="Small ribosomal subunit protein uS5">
    <location>
        <begin position="1"/>
        <end position="172"/>
    </location>
</feature>
<feature type="domain" description="S5 DRBM" evidence="1">
    <location>
        <begin position="15"/>
        <end position="78"/>
    </location>
</feature>
<organism>
    <name type="scientific">Dehalococcoides mccartyi (strain CBDB1)</name>
    <dbReference type="NCBI Taxonomy" id="255470"/>
    <lineage>
        <taxon>Bacteria</taxon>
        <taxon>Bacillati</taxon>
        <taxon>Chloroflexota</taxon>
        <taxon>Dehalococcoidia</taxon>
        <taxon>Dehalococcoidales</taxon>
        <taxon>Dehalococcoidaceae</taxon>
        <taxon>Dehalococcoides</taxon>
    </lineage>
</organism>
<reference key="1">
    <citation type="journal article" date="2005" name="Nat. Biotechnol.">
        <title>Genome sequence of the chlorinated compound-respiring bacterium Dehalococcoides species strain CBDB1.</title>
        <authorList>
            <person name="Kube M."/>
            <person name="Beck A."/>
            <person name="Zinder S.H."/>
            <person name="Kuhl H."/>
            <person name="Reinhardt R."/>
            <person name="Adrian L."/>
        </authorList>
    </citation>
    <scope>NUCLEOTIDE SEQUENCE [LARGE SCALE GENOMIC DNA]</scope>
    <source>
        <strain>CBDB1</strain>
    </source>
</reference>
<proteinExistence type="inferred from homology"/>
<gene>
    <name evidence="1" type="primary">rpsE</name>
    <name type="ordered locus">cbdbA455</name>
</gene>
<evidence type="ECO:0000255" key="1">
    <source>
        <dbReference type="HAMAP-Rule" id="MF_01307"/>
    </source>
</evidence>
<evidence type="ECO:0000305" key="2"/>
<accession>Q3ZZQ7</accession>
<protein>
    <recommendedName>
        <fullName evidence="1">Small ribosomal subunit protein uS5</fullName>
    </recommendedName>
    <alternativeName>
        <fullName evidence="2">30S ribosomal protein S5</fullName>
    </alternativeName>
</protein>
<dbReference type="EMBL" id="AJ965256">
    <property type="protein sequence ID" value="CAI82656.1"/>
    <property type="molecule type" value="Genomic_DNA"/>
</dbReference>
<dbReference type="RefSeq" id="WP_011309011.1">
    <property type="nucleotide sequence ID" value="NC_007356.1"/>
</dbReference>
<dbReference type="SMR" id="Q3ZZQ7"/>
<dbReference type="KEGG" id="deh:cbdbA455"/>
<dbReference type="HOGENOM" id="CLU_065898_2_2_0"/>
<dbReference type="Proteomes" id="UP000000433">
    <property type="component" value="Chromosome"/>
</dbReference>
<dbReference type="GO" id="GO:0022627">
    <property type="term" value="C:cytosolic small ribosomal subunit"/>
    <property type="evidence" value="ECO:0007669"/>
    <property type="project" value="TreeGrafter"/>
</dbReference>
<dbReference type="GO" id="GO:0019843">
    <property type="term" value="F:rRNA binding"/>
    <property type="evidence" value="ECO:0007669"/>
    <property type="project" value="UniProtKB-UniRule"/>
</dbReference>
<dbReference type="GO" id="GO:0003735">
    <property type="term" value="F:structural constituent of ribosome"/>
    <property type="evidence" value="ECO:0007669"/>
    <property type="project" value="InterPro"/>
</dbReference>
<dbReference type="GO" id="GO:0006412">
    <property type="term" value="P:translation"/>
    <property type="evidence" value="ECO:0007669"/>
    <property type="project" value="UniProtKB-UniRule"/>
</dbReference>
<dbReference type="FunFam" id="3.30.160.20:FF:000001">
    <property type="entry name" value="30S ribosomal protein S5"/>
    <property type="match status" value="1"/>
</dbReference>
<dbReference type="FunFam" id="3.30.230.10:FF:000002">
    <property type="entry name" value="30S ribosomal protein S5"/>
    <property type="match status" value="1"/>
</dbReference>
<dbReference type="Gene3D" id="3.30.160.20">
    <property type="match status" value="1"/>
</dbReference>
<dbReference type="Gene3D" id="3.30.230.10">
    <property type="match status" value="1"/>
</dbReference>
<dbReference type="HAMAP" id="MF_01307_B">
    <property type="entry name" value="Ribosomal_uS5_B"/>
    <property type="match status" value="1"/>
</dbReference>
<dbReference type="InterPro" id="IPR020568">
    <property type="entry name" value="Ribosomal_Su5_D2-typ_SF"/>
</dbReference>
<dbReference type="InterPro" id="IPR000851">
    <property type="entry name" value="Ribosomal_uS5"/>
</dbReference>
<dbReference type="InterPro" id="IPR005712">
    <property type="entry name" value="Ribosomal_uS5_bac-type"/>
</dbReference>
<dbReference type="InterPro" id="IPR005324">
    <property type="entry name" value="Ribosomal_uS5_C"/>
</dbReference>
<dbReference type="InterPro" id="IPR013810">
    <property type="entry name" value="Ribosomal_uS5_N"/>
</dbReference>
<dbReference type="InterPro" id="IPR014721">
    <property type="entry name" value="Ribsml_uS5_D2-typ_fold_subgr"/>
</dbReference>
<dbReference type="NCBIfam" id="TIGR01021">
    <property type="entry name" value="rpsE_bact"/>
    <property type="match status" value="1"/>
</dbReference>
<dbReference type="PANTHER" id="PTHR13718">
    <property type="entry name" value="RIBOSOMAL S SUBUNIT"/>
    <property type="match status" value="1"/>
</dbReference>
<dbReference type="PANTHER" id="PTHR13718:SF61">
    <property type="entry name" value="SMALL RIBOSOMAL SUBUNIT PROTEIN US5M"/>
    <property type="match status" value="1"/>
</dbReference>
<dbReference type="Pfam" id="PF00333">
    <property type="entry name" value="Ribosomal_S5"/>
    <property type="match status" value="1"/>
</dbReference>
<dbReference type="Pfam" id="PF03719">
    <property type="entry name" value="Ribosomal_S5_C"/>
    <property type="match status" value="1"/>
</dbReference>
<dbReference type="SUPFAM" id="SSF54768">
    <property type="entry name" value="dsRNA-binding domain-like"/>
    <property type="match status" value="1"/>
</dbReference>
<dbReference type="SUPFAM" id="SSF54211">
    <property type="entry name" value="Ribosomal protein S5 domain 2-like"/>
    <property type="match status" value="1"/>
</dbReference>
<dbReference type="PROSITE" id="PS50881">
    <property type="entry name" value="S5_DSRBD"/>
    <property type="match status" value="1"/>
</dbReference>
<name>RS5_DEHMC</name>
<sequence length="172" mass="17846">MLAKVERIDPSELELNDKLIFINRVTKVVKGGKRMGFAALVVTGDGKNHVGIGVGKAKEVPSAISKASANAKRNLSRILLNGTTVPHEIVFKYGAAQVLLKPAAPGTGIIAGGSVRAVLESTGIKDVLTKSMGCSNKANVAKATLGGLTAMRDPKATVTKRRSSLKEEATGG</sequence>
<comment type="function">
    <text evidence="1">With S4 and S12 plays an important role in translational accuracy.</text>
</comment>
<comment type="function">
    <text evidence="1">Located at the back of the 30S subunit body where it stabilizes the conformation of the head with respect to the body.</text>
</comment>
<comment type="subunit">
    <text evidence="1">Part of the 30S ribosomal subunit. Contacts proteins S4 and S8.</text>
</comment>
<comment type="domain">
    <text>The N-terminal domain interacts with the head of the 30S subunit; the C-terminal domain interacts with the body and contacts protein S4. The interaction surface between S4 and S5 is involved in control of translational fidelity.</text>
</comment>
<comment type="similarity">
    <text evidence="1">Belongs to the universal ribosomal protein uS5 family.</text>
</comment>
<keyword id="KW-0687">Ribonucleoprotein</keyword>
<keyword id="KW-0689">Ribosomal protein</keyword>
<keyword id="KW-0694">RNA-binding</keyword>
<keyword id="KW-0699">rRNA-binding</keyword>